<evidence type="ECO:0000250" key="1">
    <source>
        <dbReference type="UniProtKB" id="Q9HTK8"/>
    </source>
</evidence>
<evidence type="ECO:0000255" key="2">
    <source>
        <dbReference type="PROSITE-ProRule" id="PRU00241"/>
    </source>
</evidence>
<evidence type="ECO:0000305" key="3"/>
<proteinExistence type="inferred from homology"/>
<keyword id="KW-0249">Electron transport</keyword>
<keyword id="KW-0408">Iron</keyword>
<keyword id="KW-0479">Metal-binding</keyword>
<keyword id="KW-0813">Transport</keyword>
<reference key="1">
    <citation type="submission" date="2001-06" db="EMBL/GenBank/DDBJ databases">
        <title>Cloning and characterization of multiple alkane hydroxylase systems in Rhodococcus spp. strains Q15 and 16531.</title>
        <authorList>
            <person name="Whyte L.G."/>
            <person name="Smits T.H."/>
            <person name="Labbe D."/>
            <person name="Witholt B."/>
            <person name="Greer C.W."/>
            <person name="Van Beilen J.B."/>
        </authorList>
    </citation>
    <scope>NUCLEOTIDE SEQUENCE [GENOMIC DNA]</scope>
</reference>
<gene>
    <name type="primary">rubA4</name>
</gene>
<dbReference type="EMBL" id="AF388182">
    <property type="protein sequence ID" value="AAK97456.1"/>
    <property type="molecule type" value="Genomic_DNA"/>
</dbReference>
<dbReference type="SMR" id="P0A4F1"/>
<dbReference type="GO" id="GO:0009055">
    <property type="term" value="F:electron transfer activity"/>
    <property type="evidence" value="ECO:0007669"/>
    <property type="project" value="InterPro"/>
</dbReference>
<dbReference type="GO" id="GO:0005506">
    <property type="term" value="F:iron ion binding"/>
    <property type="evidence" value="ECO:0007669"/>
    <property type="project" value="InterPro"/>
</dbReference>
<dbReference type="GO" id="GO:0043448">
    <property type="term" value="P:alkane catabolic process"/>
    <property type="evidence" value="ECO:0007669"/>
    <property type="project" value="TreeGrafter"/>
</dbReference>
<dbReference type="CDD" id="cd00730">
    <property type="entry name" value="rubredoxin"/>
    <property type="match status" value="1"/>
</dbReference>
<dbReference type="FunFam" id="2.20.28.10:FF:000001">
    <property type="entry name" value="Rubredoxin"/>
    <property type="match status" value="1"/>
</dbReference>
<dbReference type="Gene3D" id="2.20.28.10">
    <property type="match status" value="1"/>
</dbReference>
<dbReference type="InterPro" id="IPR024922">
    <property type="entry name" value="Rubredoxin"/>
</dbReference>
<dbReference type="InterPro" id="IPR024934">
    <property type="entry name" value="Rubredoxin-like_dom"/>
</dbReference>
<dbReference type="InterPro" id="IPR024935">
    <property type="entry name" value="Rubredoxin_dom"/>
</dbReference>
<dbReference type="InterPro" id="IPR050526">
    <property type="entry name" value="Rubredoxin_ET"/>
</dbReference>
<dbReference type="InterPro" id="IPR018527">
    <property type="entry name" value="Rubredoxin_Fe_BS"/>
</dbReference>
<dbReference type="PANTHER" id="PTHR47627">
    <property type="entry name" value="RUBREDOXIN"/>
    <property type="match status" value="1"/>
</dbReference>
<dbReference type="PANTHER" id="PTHR47627:SF1">
    <property type="entry name" value="RUBREDOXIN-1-RELATED"/>
    <property type="match status" value="1"/>
</dbReference>
<dbReference type="Pfam" id="PF00301">
    <property type="entry name" value="Rubredoxin"/>
    <property type="match status" value="1"/>
</dbReference>
<dbReference type="PIRSF" id="PIRSF000071">
    <property type="entry name" value="Rubredoxin"/>
    <property type="match status" value="1"/>
</dbReference>
<dbReference type="PRINTS" id="PR00163">
    <property type="entry name" value="RUBREDOXIN"/>
</dbReference>
<dbReference type="SUPFAM" id="SSF57802">
    <property type="entry name" value="Rubredoxin-like"/>
    <property type="match status" value="1"/>
</dbReference>
<dbReference type="PROSITE" id="PS00202">
    <property type="entry name" value="RUBREDOXIN"/>
    <property type="match status" value="1"/>
</dbReference>
<dbReference type="PROSITE" id="PS50903">
    <property type="entry name" value="RUBREDOXIN_LIKE"/>
    <property type="match status" value="1"/>
</dbReference>
<comment type="function">
    <text>Involved in the hydrocarbon hydroxylating system, which transfers electrons from NADH to rubredoxin reductase and then through rubredoxin to alkane 1 monooxygenase.</text>
</comment>
<comment type="cofactor">
    <cofactor evidence="1">
        <name>Fe(3+)</name>
        <dbReference type="ChEBI" id="CHEBI:29034"/>
    </cofactor>
    <text evidence="1">Binds 1 Fe(3+) ions per subunit.</text>
</comment>
<comment type="similarity">
    <text evidence="3">Belongs to the rubredoxin family.</text>
</comment>
<protein>
    <recommendedName>
        <fullName>Rubredoxin 4</fullName>
    </recommendedName>
</protein>
<organism>
    <name type="scientific">Rhodococcus sp. (strain Q15)</name>
    <dbReference type="NCBI Taxonomy" id="72804"/>
    <lineage>
        <taxon>Bacteria</taxon>
        <taxon>Bacillati</taxon>
        <taxon>Actinomycetota</taxon>
        <taxon>Actinomycetes</taxon>
        <taxon>Mycobacteriales</taxon>
        <taxon>Nocardiaceae</taxon>
        <taxon>Rhodococcus</taxon>
    </lineage>
</organism>
<accession>P0A4F1</accession>
<accession>Q9AE66</accession>
<name>RUBR4_RHOSQ</name>
<sequence length="60" mass="6973">MNDYKLYQCAQCGFEYDEAVGWPEDGIEPGTRWDDIPEDWSCPDCGAAKSDFFMVEVERR</sequence>
<feature type="chain" id="PRO_0000135049" description="Rubredoxin 4">
    <location>
        <begin position="1"/>
        <end position="60"/>
    </location>
</feature>
<feature type="domain" description="Rubredoxin-like" evidence="2">
    <location>
        <begin position="4"/>
        <end position="55"/>
    </location>
</feature>
<feature type="binding site" evidence="2">
    <location>
        <position position="9"/>
    </location>
    <ligand>
        <name>Fe cation</name>
        <dbReference type="ChEBI" id="CHEBI:24875"/>
    </ligand>
</feature>
<feature type="binding site" evidence="2">
    <location>
        <position position="12"/>
    </location>
    <ligand>
        <name>Fe cation</name>
        <dbReference type="ChEBI" id="CHEBI:24875"/>
    </ligand>
</feature>
<feature type="binding site" evidence="2">
    <location>
        <position position="42"/>
    </location>
    <ligand>
        <name>Fe cation</name>
        <dbReference type="ChEBI" id="CHEBI:24875"/>
    </ligand>
</feature>
<feature type="binding site" evidence="2">
    <location>
        <position position="45"/>
    </location>
    <ligand>
        <name>Fe cation</name>
        <dbReference type="ChEBI" id="CHEBI:24875"/>
    </ligand>
</feature>